<accession>Q7MH47</accession>
<dbReference type="EC" id="5.3.1.1" evidence="1"/>
<dbReference type="EMBL" id="BA000037">
    <property type="protein sequence ID" value="BAC95789.1"/>
    <property type="molecule type" value="Genomic_DNA"/>
</dbReference>
<dbReference type="RefSeq" id="WP_011079322.1">
    <property type="nucleotide sequence ID" value="NC_005139.1"/>
</dbReference>
<dbReference type="SMR" id="Q7MH47"/>
<dbReference type="STRING" id="672.VV93_v1c27530"/>
<dbReference type="GeneID" id="93895611"/>
<dbReference type="KEGG" id="vvy:VV3025"/>
<dbReference type="eggNOG" id="COG0149">
    <property type="taxonomic scope" value="Bacteria"/>
</dbReference>
<dbReference type="HOGENOM" id="CLU_024251_2_3_6"/>
<dbReference type="UniPathway" id="UPA00109">
    <property type="reaction ID" value="UER00189"/>
</dbReference>
<dbReference type="UniPathway" id="UPA00138"/>
<dbReference type="Proteomes" id="UP000002675">
    <property type="component" value="Chromosome I"/>
</dbReference>
<dbReference type="GO" id="GO:0005829">
    <property type="term" value="C:cytosol"/>
    <property type="evidence" value="ECO:0007669"/>
    <property type="project" value="TreeGrafter"/>
</dbReference>
<dbReference type="GO" id="GO:0004807">
    <property type="term" value="F:triose-phosphate isomerase activity"/>
    <property type="evidence" value="ECO:0007669"/>
    <property type="project" value="UniProtKB-UniRule"/>
</dbReference>
<dbReference type="GO" id="GO:0006094">
    <property type="term" value="P:gluconeogenesis"/>
    <property type="evidence" value="ECO:0007669"/>
    <property type="project" value="UniProtKB-UniRule"/>
</dbReference>
<dbReference type="GO" id="GO:0046166">
    <property type="term" value="P:glyceraldehyde-3-phosphate biosynthetic process"/>
    <property type="evidence" value="ECO:0007669"/>
    <property type="project" value="TreeGrafter"/>
</dbReference>
<dbReference type="GO" id="GO:0019563">
    <property type="term" value="P:glycerol catabolic process"/>
    <property type="evidence" value="ECO:0007669"/>
    <property type="project" value="TreeGrafter"/>
</dbReference>
<dbReference type="GO" id="GO:0006096">
    <property type="term" value="P:glycolytic process"/>
    <property type="evidence" value="ECO:0007669"/>
    <property type="project" value="UniProtKB-UniRule"/>
</dbReference>
<dbReference type="CDD" id="cd00311">
    <property type="entry name" value="TIM"/>
    <property type="match status" value="1"/>
</dbReference>
<dbReference type="FunFam" id="3.20.20.70:FF:000020">
    <property type="entry name" value="Triosephosphate isomerase"/>
    <property type="match status" value="1"/>
</dbReference>
<dbReference type="Gene3D" id="3.20.20.70">
    <property type="entry name" value="Aldolase class I"/>
    <property type="match status" value="1"/>
</dbReference>
<dbReference type="HAMAP" id="MF_00147_B">
    <property type="entry name" value="TIM_B"/>
    <property type="match status" value="1"/>
</dbReference>
<dbReference type="InterPro" id="IPR013785">
    <property type="entry name" value="Aldolase_TIM"/>
</dbReference>
<dbReference type="InterPro" id="IPR035990">
    <property type="entry name" value="TIM_sf"/>
</dbReference>
<dbReference type="InterPro" id="IPR022896">
    <property type="entry name" value="TrioseP_Isoase_bac/euk"/>
</dbReference>
<dbReference type="InterPro" id="IPR000652">
    <property type="entry name" value="Triosephosphate_isomerase"/>
</dbReference>
<dbReference type="InterPro" id="IPR020861">
    <property type="entry name" value="Triosephosphate_isomerase_AS"/>
</dbReference>
<dbReference type="NCBIfam" id="TIGR00419">
    <property type="entry name" value="tim"/>
    <property type="match status" value="1"/>
</dbReference>
<dbReference type="PANTHER" id="PTHR21139">
    <property type="entry name" value="TRIOSEPHOSPHATE ISOMERASE"/>
    <property type="match status" value="1"/>
</dbReference>
<dbReference type="PANTHER" id="PTHR21139:SF42">
    <property type="entry name" value="TRIOSEPHOSPHATE ISOMERASE"/>
    <property type="match status" value="1"/>
</dbReference>
<dbReference type="Pfam" id="PF00121">
    <property type="entry name" value="TIM"/>
    <property type="match status" value="1"/>
</dbReference>
<dbReference type="SUPFAM" id="SSF51351">
    <property type="entry name" value="Triosephosphate isomerase (TIM)"/>
    <property type="match status" value="1"/>
</dbReference>
<dbReference type="PROSITE" id="PS00171">
    <property type="entry name" value="TIM_1"/>
    <property type="match status" value="1"/>
</dbReference>
<dbReference type="PROSITE" id="PS51440">
    <property type="entry name" value="TIM_2"/>
    <property type="match status" value="1"/>
</dbReference>
<sequence length="256" mass="26948">MRRPVVMGNWKLNGSKTMVAELLTGLNAELEGVEGVDVAVAPPALYIDLAERLIAEGGNKIILGAQNTDINNSGAFTGDMSPAMLKDFGATHIIIGHSERREYHNESDEFVAKKFAFLKENGLKPVFCIGETEAQNEAGETEAVCARQINAVIDAYGVEALNGAIIAYEPIWAIGTGKAATAEDAQRIHASIRAMIAAKDAAVAEQVIIQYGGSVKPENAEAYFAQPDIDGALVGGASLDAKSFAAIAKAAAKMKA</sequence>
<reference key="1">
    <citation type="journal article" date="2003" name="Genome Res.">
        <title>Comparative genome analysis of Vibrio vulnificus, a marine pathogen.</title>
        <authorList>
            <person name="Chen C.-Y."/>
            <person name="Wu K.-M."/>
            <person name="Chang Y.-C."/>
            <person name="Chang C.-H."/>
            <person name="Tsai H.-C."/>
            <person name="Liao T.-L."/>
            <person name="Liu Y.-M."/>
            <person name="Chen H.-J."/>
            <person name="Shen A.B.-T."/>
            <person name="Li J.-C."/>
            <person name="Su T.-L."/>
            <person name="Shao C.-P."/>
            <person name="Lee C.-T."/>
            <person name="Hor L.-I."/>
            <person name="Tsai S.-F."/>
        </authorList>
    </citation>
    <scope>NUCLEOTIDE SEQUENCE [LARGE SCALE GENOMIC DNA]</scope>
    <source>
        <strain>YJ016</strain>
    </source>
</reference>
<keyword id="KW-0963">Cytoplasm</keyword>
<keyword id="KW-0312">Gluconeogenesis</keyword>
<keyword id="KW-0324">Glycolysis</keyword>
<keyword id="KW-0413">Isomerase</keyword>
<comment type="function">
    <text evidence="1">Involved in the gluconeogenesis. Catalyzes stereospecifically the conversion of dihydroxyacetone phosphate (DHAP) to D-glyceraldehyde-3-phosphate (G3P).</text>
</comment>
<comment type="catalytic activity">
    <reaction evidence="1">
        <text>D-glyceraldehyde 3-phosphate = dihydroxyacetone phosphate</text>
        <dbReference type="Rhea" id="RHEA:18585"/>
        <dbReference type="ChEBI" id="CHEBI:57642"/>
        <dbReference type="ChEBI" id="CHEBI:59776"/>
        <dbReference type="EC" id="5.3.1.1"/>
    </reaction>
</comment>
<comment type="pathway">
    <text evidence="1">Carbohydrate biosynthesis; gluconeogenesis.</text>
</comment>
<comment type="pathway">
    <text evidence="1">Carbohydrate degradation; glycolysis; D-glyceraldehyde 3-phosphate from glycerone phosphate: step 1/1.</text>
</comment>
<comment type="subunit">
    <text evidence="1">Homodimer.</text>
</comment>
<comment type="subcellular location">
    <subcellularLocation>
        <location evidence="1">Cytoplasm</location>
    </subcellularLocation>
</comment>
<comment type="similarity">
    <text evidence="1">Belongs to the triosephosphate isomerase family.</text>
</comment>
<organism>
    <name type="scientific">Vibrio vulnificus (strain YJ016)</name>
    <dbReference type="NCBI Taxonomy" id="196600"/>
    <lineage>
        <taxon>Bacteria</taxon>
        <taxon>Pseudomonadati</taxon>
        <taxon>Pseudomonadota</taxon>
        <taxon>Gammaproteobacteria</taxon>
        <taxon>Vibrionales</taxon>
        <taxon>Vibrionaceae</taxon>
        <taxon>Vibrio</taxon>
    </lineage>
</organism>
<name>TPIS_VIBVY</name>
<evidence type="ECO:0000255" key="1">
    <source>
        <dbReference type="HAMAP-Rule" id="MF_00147"/>
    </source>
</evidence>
<proteinExistence type="inferred from homology"/>
<gene>
    <name evidence="1" type="primary">tpiA</name>
    <name type="ordered locus">VV3025</name>
</gene>
<protein>
    <recommendedName>
        <fullName evidence="1">Triosephosphate isomerase</fullName>
        <shortName evidence="1">TIM</shortName>
        <shortName evidence="1">TPI</shortName>
        <ecNumber evidence="1">5.3.1.1</ecNumber>
    </recommendedName>
    <alternativeName>
        <fullName evidence="1">Triose-phosphate isomerase</fullName>
    </alternativeName>
</protein>
<feature type="chain" id="PRO_0000090318" description="Triosephosphate isomerase">
    <location>
        <begin position="1"/>
        <end position="256"/>
    </location>
</feature>
<feature type="active site" description="Electrophile" evidence="1">
    <location>
        <position position="97"/>
    </location>
</feature>
<feature type="active site" description="Proton acceptor" evidence="1">
    <location>
        <position position="169"/>
    </location>
</feature>
<feature type="binding site" evidence="1">
    <location>
        <begin position="9"/>
        <end position="11"/>
    </location>
    <ligand>
        <name>substrate</name>
    </ligand>
</feature>
<feature type="binding site" evidence="1">
    <location>
        <position position="175"/>
    </location>
    <ligand>
        <name>substrate</name>
    </ligand>
</feature>
<feature type="binding site" evidence="1">
    <location>
        <position position="214"/>
    </location>
    <ligand>
        <name>substrate</name>
    </ligand>
</feature>
<feature type="binding site" evidence="1">
    <location>
        <begin position="235"/>
        <end position="236"/>
    </location>
    <ligand>
        <name>substrate</name>
    </ligand>
</feature>